<accession>B2JMM1</accession>
<gene>
    <name type="ordered locus">Bphy_3680</name>
</gene>
<keyword id="KW-1185">Reference proteome</keyword>
<feature type="chain" id="PRO_1000119985" description="UPF0145 protein Bphy_3680">
    <location>
        <begin position="1"/>
        <end position="111"/>
    </location>
</feature>
<reference key="1">
    <citation type="journal article" date="2014" name="Stand. Genomic Sci.">
        <title>Complete genome sequence of Burkholderia phymatum STM815(T), a broad host range and efficient nitrogen-fixing symbiont of Mimosa species.</title>
        <authorList>
            <person name="Moulin L."/>
            <person name="Klonowska A."/>
            <person name="Caroline B."/>
            <person name="Booth K."/>
            <person name="Vriezen J.A."/>
            <person name="Melkonian R."/>
            <person name="James E.K."/>
            <person name="Young J.P."/>
            <person name="Bena G."/>
            <person name="Hauser L."/>
            <person name="Land M."/>
            <person name="Kyrpides N."/>
            <person name="Bruce D."/>
            <person name="Chain P."/>
            <person name="Copeland A."/>
            <person name="Pitluck S."/>
            <person name="Woyke T."/>
            <person name="Lizotte-Waniewski M."/>
            <person name="Bristow J."/>
            <person name="Riley M."/>
        </authorList>
    </citation>
    <scope>NUCLEOTIDE SEQUENCE [LARGE SCALE GENOMIC DNA]</scope>
    <source>
        <strain>DSM 17167 / CIP 108236 / LMG 21445 / STM815</strain>
    </source>
</reference>
<protein>
    <recommendedName>
        <fullName evidence="1">UPF0145 protein Bphy_3680</fullName>
    </recommendedName>
</protein>
<dbReference type="EMBL" id="CP001044">
    <property type="protein sequence ID" value="ACC72815.1"/>
    <property type="molecule type" value="Genomic_DNA"/>
</dbReference>
<dbReference type="RefSeq" id="WP_012402988.1">
    <property type="nucleotide sequence ID" value="NC_010623.1"/>
</dbReference>
<dbReference type="SMR" id="B2JMM1"/>
<dbReference type="STRING" id="391038.Bphy_3680"/>
<dbReference type="KEGG" id="bph:Bphy_3680"/>
<dbReference type="eggNOG" id="COG0393">
    <property type="taxonomic scope" value="Bacteria"/>
</dbReference>
<dbReference type="HOGENOM" id="CLU_117144_1_1_4"/>
<dbReference type="OrthoDB" id="9796448at2"/>
<dbReference type="Proteomes" id="UP000001192">
    <property type="component" value="Chromosome 2"/>
</dbReference>
<dbReference type="Gene3D" id="3.30.110.70">
    <property type="entry name" value="Hypothetical protein apc22750. Chain B"/>
    <property type="match status" value="1"/>
</dbReference>
<dbReference type="HAMAP" id="MF_00338">
    <property type="entry name" value="UPF0145"/>
    <property type="match status" value="1"/>
</dbReference>
<dbReference type="InterPro" id="IPR035439">
    <property type="entry name" value="UPF0145_dom_sf"/>
</dbReference>
<dbReference type="InterPro" id="IPR002765">
    <property type="entry name" value="UPF0145_YbjQ-like"/>
</dbReference>
<dbReference type="PANTHER" id="PTHR34068:SF2">
    <property type="entry name" value="UPF0145 PROTEIN SCO3412"/>
    <property type="match status" value="1"/>
</dbReference>
<dbReference type="PANTHER" id="PTHR34068">
    <property type="entry name" value="UPF0145 PROTEIN YBJQ"/>
    <property type="match status" value="1"/>
</dbReference>
<dbReference type="Pfam" id="PF01906">
    <property type="entry name" value="YbjQ_1"/>
    <property type="match status" value="1"/>
</dbReference>
<dbReference type="SUPFAM" id="SSF117782">
    <property type="entry name" value="YbjQ-like"/>
    <property type="match status" value="1"/>
</dbReference>
<sequence>MIERHMVSTTFDLPGHTVDASLGMVRGIIVRSRSVVGSIGAGLQTIFGGNISLYTSLCERARQDAYERMLADAAMLGANAVIGMRYDATEIGAGVTEVLCYGTAVHARRNV</sequence>
<comment type="similarity">
    <text evidence="1">Belongs to the UPF0145 family.</text>
</comment>
<proteinExistence type="inferred from homology"/>
<organism>
    <name type="scientific">Paraburkholderia phymatum (strain DSM 17167 / CIP 108236 / LMG 21445 / STM815)</name>
    <name type="common">Burkholderia phymatum</name>
    <dbReference type="NCBI Taxonomy" id="391038"/>
    <lineage>
        <taxon>Bacteria</taxon>
        <taxon>Pseudomonadati</taxon>
        <taxon>Pseudomonadota</taxon>
        <taxon>Betaproteobacteria</taxon>
        <taxon>Burkholderiales</taxon>
        <taxon>Burkholderiaceae</taxon>
        <taxon>Paraburkholderia</taxon>
    </lineage>
</organism>
<evidence type="ECO:0000255" key="1">
    <source>
        <dbReference type="HAMAP-Rule" id="MF_00338"/>
    </source>
</evidence>
<name>Y3680_PARP8</name>